<comment type="catalytic activity">
    <reaction evidence="1">
        <text>(R)-pantothenate + ATP = (R)-4'-phosphopantothenate + ADP + H(+)</text>
        <dbReference type="Rhea" id="RHEA:16373"/>
        <dbReference type="ChEBI" id="CHEBI:10986"/>
        <dbReference type="ChEBI" id="CHEBI:15378"/>
        <dbReference type="ChEBI" id="CHEBI:29032"/>
        <dbReference type="ChEBI" id="CHEBI:30616"/>
        <dbReference type="ChEBI" id="CHEBI:456216"/>
        <dbReference type="EC" id="2.7.1.33"/>
    </reaction>
</comment>
<comment type="pathway">
    <text evidence="1">Cofactor biosynthesis; coenzyme A biosynthesis; CoA from (R)-pantothenate: step 1/5.</text>
</comment>
<comment type="subcellular location">
    <subcellularLocation>
        <location evidence="1">Cytoplasm</location>
    </subcellularLocation>
</comment>
<comment type="similarity">
    <text evidence="1">Belongs to the prokaryotic pantothenate kinase family.</text>
</comment>
<sequence>MSNREQSLATPYLQFNRSQWAALRDSVPLTLTEEEIVKLKGINEDLSLDEVAEIYLPLSRLLNFYISSNLRRQAVLEQFLGTDGQKIPYIIGIAGSVAVGKSTTARVLQALLSRWPEHRSVELITTDGFLHPNKVLKERDLMKKKGFPQSYDMHSLVKFVSDIKSGTHKVTAPTYSHLTYDIVPNNNKVLEQPDILILEGLNVLQSGMDYPHDPHRVFVSDFVDFSIYVDAPETLLQTWYINRFLKFRQGAFSNPNSYFHNYAKLTEEEAVGIASQLWKEINGLNLKENILPTRERASLIMTKSANHAVECVRLRK</sequence>
<accession>C6DHQ6</accession>
<name>COAA_PECCP</name>
<gene>
    <name evidence="1" type="primary">coaA</name>
    <name type="ordered locus">PC1_0196</name>
</gene>
<organism>
    <name type="scientific">Pectobacterium carotovorum subsp. carotovorum (strain PC1)</name>
    <dbReference type="NCBI Taxonomy" id="561230"/>
    <lineage>
        <taxon>Bacteria</taxon>
        <taxon>Pseudomonadati</taxon>
        <taxon>Pseudomonadota</taxon>
        <taxon>Gammaproteobacteria</taxon>
        <taxon>Enterobacterales</taxon>
        <taxon>Pectobacteriaceae</taxon>
        <taxon>Pectobacterium</taxon>
    </lineage>
</organism>
<feature type="chain" id="PRO_1000204218" description="Pantothenate kinase">
    <location>
        <begin position="1"/>
        <end position="316"/>
    </location>
</feature>
<feature type="binding site" evidence="1">
    <location>
        <begin position="95"/>
        <end position="102"/>
    </location>
    <ligand>
        <name>ATP</name>
        <dbReference type="ChEBI" id="CHEBI:30616"/>
    </ligand>
</feature>
<proteinExistence type="inferred from homology"/>
<keyword id="KW-0067">ATP-binding</keyword>
<keyword id="KW-0173">Coenzyme A biosynthesis</keyword>
<keyword id="KW-0963">Cytoplasm</keyword>
<keyword id="KW-0418">Kinase</keyword>
<keyword id="KW-0547">Nucleotide-binding</keyword>
<keyword id="KW-0808">Transferase</keyword>
<dbReference type="EC" id="2.7.1.33" evidence="1"/>
<dbReference type="EMBL" id="CP001657">
    <property type="protein sequence ID" value="ACT11256.1"/>
    <property type="molecule type" value="Genomic_DNA"/>
</dbReference>
<dbReference type="RefSeq" id="WP_012772929.1">
    <property type="nucleotide sequence ID" value="NC_012917.1"/>
</dbReference>
<dbReference type="SMR" id="C6DHQ6"/>
<dbReference type="STRING" id="561230.PC1_0196"/>
<dbReference type="GeneID" id="93388280"/>
<dbReference type="KEGG" id="pct:PC1_0196"/>
<dbReference type="eggNOG" id="COG1072">
    <property type="taxonomic scope" value="Bacteria"/>
</dbReference>
<dbReference type="HOGENOM" id="CLU_053818_1_1_6"/>
<dbReference type="OrthoDB" id="1550976at2"/>
<dbReference type="UniPathway" id="UPA00241">
    <property type="reaction ID" value="UER00352"/>
</dbReference>
<dbReference type="Proteomes" id="UP000002736">
    <property type="component" value="Chromosome"/>
</dbReference>
<dbReference type="GO" id="GO:0005737">
    <property type="term" value="C:cytoplasm"/>
    <property type="evidence" value="ECO:0007669"/>
    <property type="project" value="UniProtKB-SubCell"/>
</dbReference>
<dbReference type="GO" id="GO:0005524">
    <property type="term" value="F:ATP binding"/>
    <property type="evidence" value="ECO:0007669"/>
    <property type="project" value="UniProtKB-UniRule"/>
</dbReference>
<dbReference type="GO" id="GO:0004594">
    <property type="term" value="F:pantothenate kinase activity"/>
    <property type="evidence" value="ECO:0007669"/>
    <property type="project" value="UniProtKB-UniRule"/>
</dbReference>
<dbReference type="GO" id="GO:0015937">
    <property type="term" value="P:coenzyme A biosynthetic process"/>
    <property type="evidence" value="ECO:0007669"/>
    <property type="project" value="UniProtKB-UniRule"/>
</dbReference>
<dbReference type="CDD" id="cd02025">
    <property type="entry name" value="PanK"/>
    <property type="match status" value="1"/>
</dbReference>
<dbReference type="FunFam" id="3.40.50.300:FF:000242">
    <property type="entry name" value="Pantothenate kinase"/>
    <property type="match status" value="1"/>
</dbReference>
<dbReference type="Gene3D" id="3.40.50.300">
    <property type="entry name" value="P-loop containing nucleotide triphosphate hydrolases"/>
    <property type="match status" value="1"/>
</dbReference>
<dbReference type="HAMAP" id="MF_00215">
    <property type="entry name" value="Pantothen_kinase_1"/>
    <property type="match status" value="1"/>
</dbReference>
<dbReference type="InterPro" id="IPR027417">
    <property type="entry name" value="P-loop_NTPase"/>
</dbReference>
<dbReference type="InterPro" id="IPR004566">
    <property type="entry name" value="PanK"/>
</dbReference>
<dbReference type="InterPro" id="IPR006083">
    <property type="entry name" value="PRK/URK"/>
</dbReference>
<dbReference type="NCBIfam" id="TIGR00554">
    <property type="entry name" value="panK_bact"/>
    <property type="match status" value="1"/>
</dbReference>
<dbReference type="PANTHER" id="PTHR10285">
    <property type="entry name" value="URIDINE KINASE"/>
    <property type="match status" value="1"/>
</dbReference>
<dbReference type="Pfam" id="PF00485">
    <property type="entry name" value="PRK"/>
    <property type="match status" value="1"/>
</dbReference>
<dbReference type="PIRSF" id="PIRSF000545">
    <property type="entry name" value="Pantothenate_kin"/>
    <property type="match status" value="1"/>
</dbReference>
<dbReference type="SUPFAM" id="SSF52540">
    <property type="entry name" value="P-loop containing nucleoside triphosphate hydrolases"/>
    <property type="match status" value="1"/>
</dbReference>
<protein>
    <recommendedName>
        <fullName evidence="1">Pantothenate kinase</fullName>
        <ecNumber evidence="1">2.7.1.33</ecNumber>
    </recommendedName>
    <alternativeName>
        <fullName evidence="1">Pantothenic acid kinase</fullName>
    </alternativeName>
</protein>
<reference key="1">
    <citation type="submission" date="2009-07" db="EMBL/GenBank/DDBJ databases">
        <title>Complete sequence of Pectobacterium carotovorum subsp. carotovorum PC1.</title>
        <authorList>
            <consortium name="US DOE Joint Genome Institute"/>
            <person name="Lucas S."/>
            <person name="Copeland A."/>
            <person name="Lapidus A."/>
            <person name="Glavina del Rio T."/>
            <person name="Tice H."/>
            <person name="Bruce D."/>
            <person name="Goodwin L."/>
            <person name="Pitluck S."/>
            <person name="Munk A.C."/>
            <person name="Brettin T."/>
            <person name="Detter J.C."/>
            <person name="Han C."/>
            <person name="Tapia R."/>
            <person name="Larimer F."/>
            <person name="Land M."/>
            <person name="Hauser L."/>
            <person name="Kyrpides N."/>
            <person name="Mikhailova N."/>
            <person name="Balakrishnan V."/>
            <person name="Glasner J."/>
            <person name="Perna N.T."/>
        </authorList>
    </citation>
    <scope>NUCLEOTIDE SEQUENCE [LARGE SCALE GENOMIC DNA]</scope>
    <source>
        <strain>PC1</strain>
    </source>
</reference>
<evidence type="ECO:0000255" key="1">
    <source>
        <dbReference type="HAMAP-Rule" id="MF_00215"/>
    </source>
</evidence>